<name>ABKC_DICDI</name>
<protein>
    <recommendedName>
        <fullName>Probable serine/threonine-protein kinase abkC</fullName>
        <ecNumber>2.7.11.-</ecNumber>
    </recommendedName>
</protein>
<keyword id="KW-0067">ATP-binding</keyword>
<keyword id="KW-0175">Coiled coil</keyword>
<keyword id="KW-0418">Kinase</keyword>
<keyword id="KW-0547">Nucleotide-binding</keyword>
<keyword id="KW-1185">Reference proteome</keyword>
<keyword id="KW-0723">Serine/threonine-protein kinase</keyword>
<keyword id="KW-0808">Transferase</keyword>
<evidence type="ECO:0000250" key="1"/>
<evidence type="ECO:0000256" key="2">
    <source>
        <dbReference type="SAM" id="MobiDB-lite"/>
    </source>
</evidence>
<evidence type="ECO:0000305" key="3"/>
<organism>
    <name type="scientific">Dictyostelium discoideum</name>
    <name type="common">Social amoeba</name>
    <dbReference type="NCBI Taxonomy" id="44689"/>
    <lineage>
        <taxon>Eukaryota</taxon>
        <taxon>Amoebozoa</taxon>
        <taxon>Evosea</taxon>
        <taxon>Eumycetozoa</taxon>
        <taxon>Dictyostelia</taxon>
        <taxon>Dictyosteliales</taxon>
        <taxon>Dictyosteliaceae</taxon>
        <taxon>Dictyostelium</taxon>
    </lineage>
</organism>
<proteinExistence type="inferred from homology"/>
<dbReference type="EC" id="2.7.11.-"/>
<dbReference type="EMBL" id="AAFI02000003">
    <property type="protein sequence ID" value="EAL73340.1"/>
    <property type="molecule type" value="Genomic_DNA"/>
</dbReference>
<dbReference type="RefSeq" id="XP_647300.1">
    <property type="nucleotide sequence ID" value="XM_642208.1"/>
</dbReference>
<dbReference type="FunCoup" id="Q55G83">
    <property type="interactions" value="1"/>
</dbReference>
<dbReference type="STRING" id="44689.Q55G83"/>
<dbReference type="PaxDb" id="44689-DDB0220789"/>
<dbReference type="EnsemblProtists" id="EAL73340">
    <property type="protein sequence ID" value="EAL73340"/>
    <property type="gene ID" value="DDB_G0267774"/>
</dbReference>
<dbReference type="GeneID" id="8616109"/>
<dbReference type="KEGG" id="ddi:DDB_G0267774"/>
<dbReference type="dictyBase" id="DDB_G0267774">
    <property type="gene designation" value="abkC"/>
</dbReference>
<dbReference type="VEuPathDB" id="AmoebaDB:DDB_G0267774"/>
<dbReference type="eggNOG" id="KOG1236">
    <property type="taxonomic scope" value="Eukaryota"/>
</dbReference>
<dbReference type="HOGENOM" id="CLU_006533_6_1_1"/>
<dbReference type="InParanoid" id="Q55G83"/>
<dbReference type="OMA" id="CWIKFGQ"/>
<dbReference type="PhylomeDB" id="Q55G83"/>
<dbReference type="PRO" id="PR:Q55G83"/>
<dbReference type="Proteomes" id="UP000002195">
    <property type="component" value="Chromosome 1"/>
</dbReference>
<dbReference type="GO" id="GO:0005739">
    <property type="term" value="C:mitochondrion"/>
    <property type="evidence" value="ECO:0000318"/>
    <property type="project" value="GO_Central"/>
</dbReference>
<dbReference type="GO" id="GO:0005524">
    <property type="term" value="F:ATP binding"/>
    <property type="evidence" value="ECO:0007669"/>
    <property type="project" value="UniProtKB-KW"/>
</dbReference>
<dbReference type="GO" id="GO:0004674">
    <property type="term" value="F:protein serine/threonine kinase activity"/>
    <property type="evidence" value="ECO:0007669"/>
    <property type="project" value="UniProtKB-KW"/>
</dbReference>
<dbReference type="CDD" id="cd13971">
    <property type="entry name" value="ADCK2-like"/>
    <property type="match status" value="1"/>
</dbReference>
<dbReference type="InterPro" id="IPR004147">
    <property type="entry name" value="ABC1_dom"/>
</dbReference>
<dbReference type="InterPro" id="IPR044095">
    <property type="entry name" value="ADCK2_dom"/>
</dbReference>
<dbReference type="InterPro" id="IPR052402">
    <property type="entry name" value="ADCK_kinase"/>
</dbReference>
<dbReference type="InterPro" id="IPR011009">
    <property type="entry name" value="Kinase-like_dom_sf"/>
</dbReference>
<dbReference type="PANTHER" id="PTHR45890:SF1">
    <property type="entry name" value="AARF DOMAIN CONTAINING KINASE 2"/>
    <property type="match status" value="1"/>
</dbReference>
<dbReference type="PANTHER" id="PTHR45890">
    <property type="entry name" value="AARF DOMAIN CONTAINING KINASE 2 (PREDICTED)"/>
    <property type="match status" value="1"/>
</dbReference>
<dbReference type="Pfam" id="PF03109">
    <property type="entry name" value="ABC1"/>
    <property type="match status" value="1"/>
</dbReference>
<dbReference type="SUPFAM" id="SSF56112">
    <property type="entry name" value="Protein kinase-like (PK-like)"/>
    <property type="match status" value="1"/>
</dbReference>
<accession>Q55G83</accession>
<reference key="1">
    <citation type="journal article" date="2005" name="Nature">
        <title>The genome of the social amoeba Dictyostelium discoideum.</title>
        <authorList>
            <person name="Eichinger L."/>
            <person name="Pachebat J.A."/>
            <person name="Gloeckner G."/>
            <person name="Rajandream M.A."/>
            <person name="Sucgang R."/>
            <person name="Berriman M."/>
            <person name="Song J."/>
            <person name="Olsen R."/>
            <person name="Szafranski K."/>
            <person name="Xu Q."/>
            <person name="Tunggal B."/>
            <person name="Kummerfeld S."/>
            <person name="Madera M."/>
            <person name="Konfortov B.A."/>
            <person name="Rivero F."/>
            <person name="Bankier A.T."/>
            <person name="Lehmann R."/>
            <person name="Hamlin N."/>
            <person name="Davies R."/>
            <person name="Gaudet P."/>
            <person name="Fey P."/>
            <person name="Pilcher K."/>
            <person name="Chen G."/>
            <person name="Saunders D."/>
            <person name="Sodergren E.J."/>
            <person name="Davis P."/>
            <person name="Kerhornou A."/>
            <person name="Nie X."/>
            <person name="Hall N."/>
            <person name="Anjard C."/>
            <person name="Hemphill L."/>
            <person name="Bason N."/>
            <person name="Farbrother P."/>
            <person name="Desany B."/>
            <person name="Just E."/>
            <person name="Morio T."/>
            <person name="Rost R."/>
            <person name="Churcher C.M."/>
            <person name="Cooper J."/>
            <person name="Haydock S."/>
            <person name="van Driessche N."/>
            <person name="Cronin A."/>
            <person name="Goodhead I."/>
            <person name="Muzny D.M."/>
            <person name="Mourier T."/>
            <person name="Pain A."/>
            <person name="Lu M."/>
            <person name="Harper D."/>
            <person name="Lindsay R."/>
            <person name="Hauser H."/>
            <person name="James K.D."/>
            <person name="Quiles M."/>
            <person name="Madan Babu M."/>
            <person name="Saito T."/>
            <person name="Buchrieser C."/>
            <person name="Wardroper A."/>
            <person name="Felder M."/>
            <person name="Thangavelu M."/>
            <person name="Johnson D."/>
            <person name="Knights A."/>
            <person name="Loulseged H."/>
            <person name="Mungall K.L."/>
            <person name="Oliver K."/>
            <person name="Price C."/>
            <person name="Quail M.A."/>
            <person name="Urushihara H."/>
            <person name="Hernandez J."/>
            <person name="Rabbinowitsch E."/>
            <person name="Steffen D."/>
            <person name="Sanders M."/>
            <person name="Ma J."/>
            <person name="Kohara Y."/>
            <person name="Sharp S."/>
            <person name="Simmonds M.N."/>
            <person name="Spiegler S."/>
            <person name="Tivey A."/>
            <person name="Sugano S."/>
            <person name="White B."/>
            <person name="Walker D."/>
            <person name="Woodward J.R."/>
            <person name="Winckler T."/>
            <person name="Tanaka Y."/>
            <person name="Shaulsky G."/>
            <person name="Schleicher M."/>
            <person name="Weinstock G.M."/>
            <person name="Rosenthal A."/>
            <person name="Cox E.C."/>
            <person name="Chisholm R.L."/>
            <person name="Gibbs R.A."/>
            <person name="Loomis W.F."/>
            <person name="Platzer M."/>
            <person name="Kay R.R."/>
            <person name="Williams J.G."/>
            <person name="Dear P.H."/>
            <person name="Noegel A.A."/>
            <person name="Barrell B.G."/>
            <person name="Kuspa A."/>
        </authorList>
    </citation>
    <scope>NUCLEOTIDE SEQUENCE [LARGE SCALE GENOMIC DNA]</scope>
    <source>
        <strain>AX4</strain>
    </source>
</reference>
<reference key="2">
    <citation type="journal article" date="2006" name="PLoS Genet.">
        <title>The dictyostelium kinome -- analysis of the protein kinases from a simple model organism.</title>
        <authorList>
            <person name="Goldberg J.M."/>
            <person name="Manning G."/>
            <person name="Liu A."/>
            <person name="Fey P."/>
            <person name="Pilcher K.E."/>
            <person name="Xu Y."/>
            <person name="Smith J.L."/>
        </authorList>
    </citation>
    <scope>GENE FAMILY</scope>
    <scope>NOMENCLATURE</scope>
</reference>
<comment type="similarity">
    <text evidence="3">Belongs to the protein kinase superfamily. ADCK protein kinase family.</text>
</comment>
<sequence>MSNKQIFLKFKSGEIILNNFNKYTDSISSKLLFYQNIKNQENNSGNENYKNFNYNYKNKNNYNNNNNNNNSNSSSNNNGSNNNIKFNSLFISSIYLYNNNNSNNNDLKNDKNDNSIGNINKIIKPKIEIQDLLNPFEAIKEIVGNKEDEEINLVKIGIRVLELGLILLPSVLTFPCCFIPGVKELWWQLLLETIQFSGTCWIKFGQWISTRPDLFPDLLIEKFSQLHSQCPSHSFQFTNESIENSFNGKSIKDLFLWFDEEPMASGSVAQVHKALTMDGKVAVVKVLHPNVKSNIKRDFFIIYSLIWAFSHIPEMKWLSLPESILEFGKSMMKQADLELEASHLNRFNSNFKYNSEVIFPKPLYPLVSKEVLVESFEPGSPIMDFIKKNDHHNPTLAKIGLSAYMQMMLVDNFVHADLHPGNVLVRTSDDDNFKSIDNNYFKKYNNDNDQQQQQQYNLPFKRKLYDTIEKSHKKFDSMLGGIQLKSIDFKEHQKSSPKLIFLDVGLVTQLGQQDKDHFIELFTEIVNGNGKEGAELLIRYAREAKCTEEEMYQFKERMGTLFNQVQNSKLSEVHVGQFMSEILGLVREYHVKIESNFATLVMGTIVLEGLGKQLDPSLGLLKAAIPFLLKSQVFSFSNFIKDFFLKSKTSKKQLNNDNNNNNNNNNNNKNNNDNNNKNNNNKNNNEKNK</sequence>
<gene>
    <name type="primary">abkC</name>
    <name type="synonym">adckC</name>
    <name type="ORF">DDB_G0267774</name>
</gene>
<feature type="chain" id="PRO_0000367578" description="Probable serine/threonine-protein kinase abkC">
    <location>
        <begin position="1"/>
        <end position="689"/>
    </location>
</feature>
<feature type="domain" description="Protein kinase">
    <location>
        <begin position="257"/>
        <end position="689"/>
    </location>
</feature>
<feature type="region of interest" description="Disordered" evidence="2">
    <location>
        <begin position="42"/>
        <end position="79"/>
    </location>
</feature>
<feature type="region of interest" description="Disordered" evidence="2">
    <location>
        <begin position="652"/>
        <end position="689"/>
    </location>
</feature>
<feature type="compositionally biased region" description="Low complexity" evidence="2">
    <location>
        <begin position="655"/>
        <end position="683"/>
    </location>
</feature>
<feature type="active site" description="Proton acceptor" evidence="1">
    <location>
        <position position="417"/>
    </location>
</feature>
<feature type="binding site" evidence="1">
    <location>
        <begin position="263"/>
        <end position="271"/>
    </location>
    <ligand>
        <name>ATP</name>
        <dbReference type="ChEBI" id="CHEBI:30616"/>
    </ligand>
</feature>
<feature type="binding site" evidence="1">
    <location>
        <position position="285"/>
    </location>
    <ligand>
        <name>ATP</name>
        <dbReference type="ChEBI" id="CHEBI:30616"/>
    </ligand>
</feature>